<dbReference type="EMBL" id="BC073380">
    <property type="protein sequence ID" value="AAH73380.1"/>
    <property type="status" value="ALT_INIT"/>
    <property type="molecule type" value="mRNA"/>
</dbReference>
<dbReference type="EMBL" id="BC123107">
    <property type="protein sequence ID" value="AAI23108.1"/>
    <property type="status" value="ALT_INIT"/>
    <property type="molecule type" value="mRNA"/>
</dbReference>
<dbReference type="AGR" id="Xenbase:XB-GENE-6252002"/>
<dbReference type="Proteomes" id="UP000186698">
    <property type="component" value="Unplaced"/>
</dbReference>
<dbReference type="GO" id="GO:0005737">
    <property type="term" value="C:cytoplasm"/>
    <property type="evidence" value="ECO:0000250"/>
    <property type="project" value="UniProtKB"/>
</dbReference>
<dbReference type="GO" id="GO:0005635">
    <property type="term" value="C:nuclear envelope"/>
    <property type="evidence" value="ECO:0000250"/>
    <property type="project" value="UniProtKB"/>
</dbReference>
<dbReference type="GO" id="GO:0005634">
    <property type="term" value="C:nucleus"/>
    <property type="evidence" value="ECO:0000318"/>
    <property type="project" value="GO_Central"/>
</dbReference>
<dbReference type="GO" id="GO:0008270">
    <property type="term" value="F:zinc ion binding"/>
    <property type="evidence" value="ECO:0007669"/>
    <property type="project" value="UniProtKB-KW"/>
</dbReference>
<dbReference type="CDD" id="cd22861">
    <property type="entry name" value="CYHR1_C"/>
    <property type="match status" value="1"/>
</dbReference>
<dbReference type="CDD" id="cd16505">
    <property type="entry name" value="RING-HC_CYHR1"/>
    <property type="match status" value="1"/>
</dbReference>
<dbReference type="Gene3D" id="3.30.40.10">
    <property type="entry name" value="Zinc/RING finger domain, C3HC4 (zinc finger)"/>
    <property type="match status" value="2"/>
</dbReference>
<dbReference type="InterPro" id="IPR049548">
    <property type="entry name" value="Sina-like_RING"/>
</dbReference>
<dbReference type="InterPro" id="IPR039338">
    <property type="entry name" value="ZFTRAF1"/>
</dbReference>
<dbReference type="InterPro" id="IPR001841">
    <property type="entry name" value="Znf_RING"/>
</dbReference>
<dbReference type="InterPro" id="IPR013083">
    <property type="entry name" value="Znf_RING/FYVE/PHD"/>
</dbReference>
<dbReference type="InterPro" id="IPR001293">
    <property type="entry name" value="Znf_TRAF"/>
</dbReference>
<dbReference type="PANTHER" id="PTHR23059">
    <property type="entry name" value="CYSTEINE AND HISTIDINE-RICH PROTEIN 1"/>
    <property type="match status" value="1"/>
</dbReference>
<dbReference type="PANTHER" id="PTHR23059:SF4">
    <property type="entry name" value="ZINC FINGER TRAF-TYPE-CONTAINING PROTEIN 1"/>
    <property type="match status" value="1"/>
</dbReference>
<dbReference type="Pfam" id="PF21362">
    <property type="entry name" value="Sina_RING"/>
    <property type="match status" value="1"/>
</dbReference>
<dbReference type="SUPFAM" id="SSF57850">
    <property type="entry name" value="RING/U-box"/>
    <property type="match status" value="1"/>
</dbReference>
<dbReference type="SUPFAM" id="SSF49599">
    <property type="entry name" value="TRAF domain-like"/>
    <property type="match status" value="1"/>
</dbReference>
<dbReference type="PROSITE" id="PS50089">
    <property type="entry name" value="ZF_RING_2"/>
    <property type="match status" value="1"/>
</dbReference>
<dbReference type="PROSITE" id="PS50145">
    <property type="entry name" value="ZF_TRAF"/>
    <property type="match status" value="1"/>
</dbReference>
<feature type="chain" id="PRO_0000328856" description="Zinc finger TRAF-type-containing protein 1-A">
    <location>
        <begin position="1"/>
        <end position="365"/>
    </location>
</feature>
<feature type="zinc finger region" description="RING-type; degenerate" evidence="3">
    <location>
        <begin position="72"/>
        <end position="117"/>
    </location>
</feature>
<feature type="zinc finger region" description="TRAF-type" evidence="4">
    <location>
        <begin position="113"/>
        <end position="186"/>
    </location>
</feature>
<feature type="region of interest" description="Disordered" evidence="5">
    <location>
        <begin position="1"/>
        <end position="56"/>
    </location>
</feature>
<feature type="sequence conflict" description="In Ref. 1; AAI23108." evidence="6" ref="1">
    <original>L</original>
    <variation>M</variation>
    <location>
        <position position="11"/>
    </location>
</feature>
<name>ZFT1A_XENLA</name>
<comment type="subcellular location">
    <subcellularLocation>
        <location evidence="2">Cytoplasm</location>
    </subcellularLocation>
</comment>
<comment type="similarity">
    <text evidence="6">Belongs to the ZFTRAF1 family.</text>
</comment>
<comment type="sequence caution" evidence="6">
    <conflict type="erroneous initiation">
        <sequence resource="EMBL-CDS" id="AAH73380"/>
    </conflict>
    <text>Extended N-terminus.</text>
</comment>
<comment type="sequence caution" evidence="6">
    <conflict type="erroneous initiation">
        <sequence resource="EMBL-CDS" id="AAI23108"/>
    </conflict>
    <text>Extended N-terminus.</text>
</comment>
<proteinExistence type="evidence at transcript level"/>
<organism>
    <name type="scientific">Xenopus laevis</name>
    <name type="common">African clawed frog</name>
    <dbReference type="NCBI Taxonomy" id="8355"/>
    <lineage>
        <taxon>Eukaryota</taxon>
        <taxon>Metazoa</taxon>
        <taxon>Chordata</taxon>
        <taxon>Craniata</taxon>
        <taxon>Vertebrata</taxon>
        <taxon>Euteleostomi</taxon>
        <taxon>Amphibia</taxon>
        <taxon>Batrachia</taxon>
        <taxon>Anura</taxon>
        <taxon>Pipoidea</taxon>
        <taxon>Pipidae</taxon>
        <taxon>Xenopodinae</taxon>
        <taxon>Xenopus</taxon>
        <taxon>Xenopus</taxon>
    </lineage>
</organism>
<sequence length="365" mass="41545">MSEEREAPGPLASSSAGLGAEVGQEEVPGGAGPARLLLLPSDSDGPPKKRLRSEAEPGSVRLEERLYSVLCCTVCLDLPKASVYQCTNGHLMCAGCFIHLLADSRLKEEQATCPNCRCEISKSLCCRNLAVEKAVSELPSDCGFCLKQFPRSLLERHKKEECQDRVTQCKYKRIGCPWEGPYHELTVHESECCHPTKTGNELMEILDEMDQTHKKEMQLYNSIFSLLSFEKIGYTEVQFRPYRTDDFITRLYYETPRFTVLNQTWVLKARVNDSERNPNLSCKRTLSFQLILKSKINSPMECSFLLLKGPYDDVKIHPVIYHFVFTNENNETEYVPLPIIDSVECNKLLAAKNINLRLFIFQIQK</sequence>
<protein>
    <recommendedName>
        <fullName evidence="1">Zinc finger TRAF-type-containing protein 1-A</fullName>
    </recommendedName>
    <alternativeName>
        <fullName>Cysteine and histidine-rich protein 1-A</fullName>
    </alternativeName>
</protein>
<evidence type="ECO:0000250" key="1">
    <source>
        <dbReference type="UniProtKB" id="P0DTL6"/>
    </source>
</evidence>
<evidence type="ECO:0000250" key="2">
    <source>
        <dbReference type="UniProtKB" id="Q9QXA1"/>
    </source>
</evidence>
<evidence type="ECO:0000255" key="3">
    <source>
        <dbReference type="PROSITE-ProRule" id="PRU00175"/>
    </source>
</evidence>
<evidence type="ECO:0000255" key="4">
    <source>
        <dbReference type="PROSITE-ProRule" id="PRU00207"/>
    </source>
</evidence>
<evidence type="ECO:0000256" key="5">
    <source>
        <dbReference type="SAM" id="MobiDB-lite"/>
    </source>
</evidence>
<evidence type="ECO:0000305" key="6"/>
<keyword id="KW-0963">Cytoplasm</keyword>
<keyword id="KW-0479">Metal-binding</keyword>
<keyword id="KW-1185">Reference proteome</keyword>
<keyword id="KW-0862">Zinc</keyword>
<keyword id="KW-0863">Zinc-finger</keyword>
<reference key="1">
    <citation type="submission" date="2004-06" db="EMBL/GenBank/DDBJ databases">
        <authorList>
            <consortium name="NIH - Xenopus Gene Collection (XGC) project"/>
        </authorList>
    </citation>
    <scope>NUCLEOTIDE SEQUENCE [LARGE SCALE MRNA]</scope>
    <source>
        <tissue>Embryo</tissue>
        <tissue>Testis</tissue>
    </source>
</reference>
<accession>Q6GNX1</accession>
<accession>Q0IHK8</accession>
<gene>
    <name evidence="1" type="primary">zftraf1-a</name>
    <name type="synonym">cyhr1-a</name>
</gene>